<feature type="chain" id="PRO_0000364262" description="Eukaryotic translation initiation factor 3 subunit L">
    <location>
        <begin position="1"/>
        <end position="474"/>
    </location>
</feature>
<feature type="domain" description="PCI" evidence="2">
    <location>
        <begin position="255"/>
        <end position="449"/>
    </location>
</feature>
<dbReference type="EMBL" id="CH408030">
    <property type="protein sequence ID" value="EAQ91135.1"/>
    <property type="molecule type" value="Genomic_DNA"/>
</dbReference>
<dbReference type="RefSeq" id="XP_001229586.1">
    <property type="nucleotide sequence ID" value="XM_001229585.1"/>
</dbReference>
<dbReference type="SMR" id="Q2H9N4"/>
<dbReference type="STRING" id="306901.Q2H9N4"/>
<dbReference type="GeneID" id="4388787"/>
<dbReference type="VEuPathDB" id="FungiDB:CHGG_03070"/>
<dbReference type="eggNOG" id="KOG3677">
    <property type="taxonomic scope" value="Eukaryota"/>
</dbReference>
<dbReference type="HOGENOM" id="CLU_029210_2_0_1"/>
<dbReference type="InParanoid" id="Q2H9N4"/>
<dbReference type="OMA" id="AGWFIRN"/>
<dbReference type="OrthoDB" id="15082at2759"/>
<dbReference type="Proteomes" id="UP000001056">
    <property type="component" value="Unassembled WGS sequence"/>
</dbReference>
<dbReference type="GO" id="GO:0016282">
    <property type="term" value="C:eukaryotic 43S preinitiation complex"/>
    <property type="evidence" value="ECO:0007669"/>
    <property type="project" value="UniProtKB-UniRule"/>
</dbReference>
<dbReference type="GO" id="GO:0033290">
    <property type="term" value="C:eukaryotic 48S preinitiation complex"/>
    <property type="evidence" value="ECO:0007669"/>
    <property type="project" value="UniProtKB-UniRule"/>
</dbReference>
<dbReference type="GO" id="GO:0005852">
    <property type="term" value="C:eukaryotic translation initiation factor 3 complex"/>
    <property type="evidence" value="ECO:0007669"/>
    <property type="project" value="UniProtKB-UniRule"/>
</dbReference>
<dbReference type="GO" id="GO:0003743">
    <property type="term" value="F:translation initiation factor activity"/>
    <property type="evidence" value="ECO:0007669"/>
    <property type="project" value="UniProtKB-UniRule"/>
</dbReference>
<dbReference type="GO" id="GO:0001732">
    <property type="term" value="P:formation of cytoplasmic translation initiation complex"/>
    <property type="evidence" value="ECO:0007669"/>
    <property type="project" value="UniProtKB-UniRule"/>
</dbReference>
<dbReference type="HAMAP" id="MF_03011">
    <property type="entry name" value="eIF3l"/>
    <property type="match status" value="1"/>
</dbReference>
<dbReference type="InterPro" id="IPR019382">
    <property type="entry name" value="eIF3l"/>
</dbReference>
<dbReference type="InterPro" id="IPR000717">
    <property type="entry name" value="PCI_dom"/>
</dbReference>
<dbReference type="PANTHER" id="PTHR13242">
    <property type="entry name" value="EUKARYOTIC TRANSLATION INITIATION FACTOR 3"/>
    <property type="match status" value="1"/>
</dbReference>
<dbReference type="PANTHER" id="PTHR13242:SF0">
    <property type="entry name" value="EUKARYOTIC TRANSLATION INITIATION FACTOR 3 SUBUNIT L"/>
    <property type="match status" value="1"/>
</dbReference>
<dbReference type="Pfam" id="PF10255">
    <property type="entry name" value="Paf67"/>
    <property type="match status" value="1"/>
</dbReference>
<dbReference type="PROSITE" id="PS50250">
    <property type="entry name" value="PCI"/>
    <property type="match status" value="1"/>
</dbReference>
<sequence length="474" mass="54754">MSYQTGMAPARAMEDDSDVEEEALVADYREQVQYSEGGMEEMDQATLAQQADEIQSRLVQASQPLDFQATLETKFASYDNYCALFHYILNSEGPVDLEPPTYYWAWDVIDEFIYQFNTFCTYRARIARQAGNEEEAQILRDNPNTWGCYSVLNVLYSLIQKSQITEQLAAMKRNEDPMAVAGPYGSKNLYRMLGYFSIIGLLRVHCLLGDFSLALKTLDDIELNKKAMFARVMAAHFTTYYYVGFSYMMMRRYADAIRMFSHILIYVSRTKNFQKNTQYDSITKKNDQMLALIAICVAFHPTRLDDTIHTALREKYGDQLLKLQRGGPDSLPVFEELFKSACPKFMSPIPPDFDKPEANIDPIDHHLSVFMEEVKTNMWSPTVKSYLRLYTTMDLKKLAGFLDVKPEELRSWLLVSKQRTKQLRWTENGLLEGEPVNVSDLDYALQGDLIHISEAKMGRKLVDWYIRNLSRTYA</sequence>
<evidence type="ECO:0000255" key="1">
    <source>
        <dbReference type="HAMAP-Rule" id="MF_03011"/>
    </source>
</evidence>
<evidence type="ECO:0000255" key="2">
    <source>
        <dbReference type="PROSITE-ProRule" id="PRU01185"/>
    </source>
</evidence>
<organism>
    <name type="scientific">Chaetomium globosum (strain ATCC 6205 / CBS 148.51 / DSM 1962 / NBRC 6347 / NRRL 1970)</name>
    <name type="common">Soil fungus</name>
    <dbReference type="NCBI Taxonomy" id="306901"/>
    <lineage>
        <taxon>Eukaryota</taxon>
        <taxon>Fungi</taxon>
        <taxon>Dikarya</taxon>
        <taxon>Ascomycota</taxon>
        <taxon>Pezizomycotina</taxon>
        <taxon>Sordariomycetes</taxon>
        <taxon>Sordariomycetidae</taxon>
        <taxon>Sordariales</taxon>
        <taxon>Chaetomiaceae</taxon>
        <taxon>Chaetomium</taxon>
    </lineage>
</organism>
<protein>
    <recommendedName>
        <fullName evidence="1">Eukaryotic translation initiation factor 3 subunit L</fullName>
        <shortName evidence="1">eIF3l</shortName>
    </recommendedName>
</protein>
<reference key="1">
    <citation type="journal article" date="2015" name="Genome Announc.">
        <title>Draft genome sequence of the cellulolytic fungus Chaetomium globosum.</title>
        <authorList>
            <person name="Cuomo C.A."/>
            <person name="Untereiner W.A."/>
            <person name="Ma L.-J."/>
            <person name="Grabherr M."/>
            <person name="Birren B.W."/>
        </authorList>
    </citation>
    <scope>NUCLEOTIDE SEQUENCE [LARGE SCALE GENOMIC DNA]</scope>
    <source>
        <strain>ATCC 6205 / CBS 148.51 / DSM 1962 / NBRC 6347 / NRRL 1970</strain>
    </source>
</reference>
<name>EIF3L_CHAGB</name>
<gene>
    <name type="ORF">CHGG_03070</name>
</gene>
<proteinExistence type="inferred from homology"/>
<accession>Q2H9N4</accession>
<keyword id="KW-0963">Cytoplasm</keyword>
<keyword id="KW-0396">Initiation factor</keyword>
<keyword id="KW-0648">Protein biosynthesis</keyword>
<keyword id="KW-1185">Reference proteome</keyword>
<comment type="function">
    <text evidence="1">Component of the eukaryotic translation initiation factor 3 (eIF-3) complex, which is involved in protein synthesis of a specialized repertoire of mRNAs and, together with other initiation factors, stimulates binding of mRNA and methionyl-tRNAi to the 40S ribosome. The eIF-3 complex specifically targets and initiates translation of a subset of mRNAs involved in cell proliferation.</text>
</comment>
<comment type="subunit">
    <text evidence="1">Component of the eukaryotic translation initiation factor 3 (eIF-3) complex.</text>
</comment>
<comment type="subcellular location">
    <subcellularLocation>
        <location evidence="1">Cytoplasm</location>
    </subcellularLocation>
</comment>
<comment type="similarity">
    <text evidence="1">Belongs to the eIF-3 subunit L family.</text>
</comment>